<evidence type="ECO:0000255" key="1">
    <source>
        <dbReference type="HAMAP-Rule" id="MF_00722"/>
    </source>
</evidence>
<dbReference type="EC" id="3.1.-.-" evidence="1"/>
<dbReference type="EMBL" id="AE009950">
    <property type="protein sequence ID" value="AAL80136.1"/>
    <property type="molecule type" value="Genomic_DNA"/>
</dbReference>
<dbReference type="SMR" id="Q8U4R1"/>
<dbReference type="STRING" id="186497.PF0012"/>
<dbReference type="PaxDb" id="186497-PF0012"/>
<dbReference type="KEGG" id="pfu:PF0012"/>
<dbReference type="PATRIC" id="fig|186497.12.peg.13"/>
<dbReference type="eggNOG" id="arCOG01304">
    <property type="taxonomic scope" value="Archaea"/>
</dbReference>
<dbReference type="HOGENOM" id="CLU_069350_1_0_2"/>
<dbReference type="PhylomeDB" id="Q8U4R1"/>
<dbReference type="Proteomes" id="UP000001013">
    <property type="component" value="Chromosome"/>
</dbReference>
<dbReference type="GO" id="GO:0005737">
    <property type="term" value="C:cytoplasm"/>
    <property type="evidence" value="ECO:0007669"/>
    <property type="project" value="UniProtKB-SubCell"/>
</dbReference>
<dbReference type="GO" id="GO:0003677">
    <property type="term" value="F:DNA binding"/>
    <property type="evidence" value="ECO:0007669"/>
    <property type="project" value="UniProtKB-KW"/>
</dbReference>
<dbReference type="GO" id="GO:0000014">
    <property type="term" value="F:single-stranded DNA endodeoxyribonuclease activity"/>
    <property type="evidence" value="ECO:0007669"/>
    <property type="project" value="UniProtKB-UniRule"/>
</dbReference>
<dbReference type="CDD" id="cd22341">
    <property type="entry name" value="NucS-like"/>
    <property type="match status" value="1"/>
</dbReference>
<dbReference type="Gene3D" id="2.70.180.20">
    <property type="match status" value="1"/>
</dbReference>
<dbReference type="Gene3D" id="3.40.1350.10">
    <property type="match status" value="1"/>
</dbReference>
<dbReference type="HAMAP" id="MF_00722">
    <property type="entry name" value="NucS"/>
    <property type="match status" value="1"/>
</dbReference>
<dbReference type="InterPro" id="IPR002793">
    <property type="entry name" value="Endonuclease_NucS"/>
</dbReference>
<dbReference type="InterPro" id="IPR048301">
    <property type="entry name" value="NucS_C"/>
</dbReference>
<dbReference type="InterPro" id="IPR048302">
    <property type="entry name" value="NucS_N"/>
</dbReference>
<dbReference type="InterPro" id="IPR049173">
    <property type="entry name" value="NucS_N_sf"/>
</dbReference>
<dbReference type="InterPro" id="IPR011856">
    <property type="entry name" value="tRNA_endonuc-like_dom_sf"/>
</dbReference>
<dbReference type="NCBIfam" id="NF003270">
    <property type="entry name" value="PRK04247.1"/>
    <property type="match status" value="1"/>
</dbReference>
<dbReference type="PANTHER" id="PTHR38814">
    <property type="entry name" value="ENDONUCLEASE NUCS"/>
    <property type="match status" value="1"/>
</dbReference>
<dbReference type="PANTHER" id="PTHR38814:SF1">
    <property type="entry name" value="ENDONUCLEASE NUCS"/>
    <property type="match status" value="1"/>
</dbReference>
<dbReference type="Pfam" id="PF01939">
    <property type="entry name" value="NucS_C"/>
    <property type="match status" value="1"/>
</dbReference>
<dbReference type="Pfam" id="PF21003">
    <property type="entry name" value="NucS_N"/>
    <property type="match status" value="1"/>
</dbReference>
<name>NUCS_PYRFU</name>
<organism>
    <name type="scientific">Pyrococcus furiosus (strain ATCC 43587 / DSM 3638 / JCM 8422 / Vc1)</name>
    <dbReference type="NCBI Taxonomy" id="186497"/>
    <lineage>
        <taxon>Archaea</taxon>
        <taxon>Methanobacteriati</taxon>
        <taxon>Methanobacteriota</taxon>
        <taxon>Thermococci</taxon>
        <taxon>Thermococcales</taxon>
        <taxon>Thermococcaceae</taxon>
        <taxon>Pyrococcus</taxon>
    </lineage>
</organism>
<comment type="function">
    <text evidence="1">Cleaves both 3' and 5' ssDNA extremities of branched DNA structures.</text>
</comment>
<comment type="subcellular location">
    <subcellularLocation>
        <location evidence="1">Cytoplasm</location>
    </subcellularLocation>
</comment>
<comment type="similarity">
    <text evidence="1">Belongs to the NucS endonuclease family.</text>
</comment>
<sequence>MEMTKAIVKENPRIEEIKELLEVAESREGLLTIFARCTVYYEGRAKSELGEGDRIIIIKPDGSFLIHQKKKREPVNWQPPGSKVKMEGNSLISIRRNPKETLKVDIIEAYAAVLFMAEDYEELTLTGSEAEMAELIFQNPNVIEEGFKPMFREKPIKHGIVDVLGVDREGNIVVLELKRRRADLHAVSQLKRYVDALKEEHGNKVRGILVAPSLTEGAKKLLEKLGLEFRKLEPPKKGKKKSSKQKTLDFLNDTVRITGASPPEAIQ</sequence>
<keyword id="KW-0963">Cytoplasm</keyword>
<keyword id="KW-0238">DNA-binding</keyword>
<keyword id="KW-0255">Endonuclease</keyword>
<keyword id="KW-0378">Hydrolase</keyword>
<keyword id="KW-0540">Nuclease</keyword>
<keyword id="KW-1185">Reference proteome</keyword>
<feature type="chain" id="PRO_0000155696" description="Endonuclease NucS">
    <location>
        <begin position="1"/>
        <end position="267"/>
    </location>
</feature>
<reference key="1">
    <citation type="journal article" date="1999" name="Genetics">
        <title>Divergence of the hyperthermophilic archaea Pyrococcus furiosus and P. horikoshii inferred from complete genomic sequences.</title>
        <authorList>
            <person name="Maeder D.L."/>
            <person name="Weiss R.B."/>
            <person name="Dunn D.M."/>
            <person name="Cherry J.L."/>
            <person name="Gonzalez J.M."/>
            <person name="DiRuggiero J."/>
            <person name="Robb F.T."/>
        </authorList>
    </citation>
    <scope>NUCLEOTIDE SEQUENCE [LARGE SCALE GENOMIC DNA]</scope>
    <source>
        <strain>ATCC 43587 / DSM 3638 / JCM 8422 / Vc1</strain>
    </source>
</reference>
<protein>
    <recommendedName>
        <fullName evidence="1">Endonuclease NucS</fullName>
        <ecNumber evidence="1">3.1.-.-</ecNumber>
    </recommendedName>
</protein>
<gene>
    <name evidence="1" type="primary">nucS</name>
    <name type="ordered locus">PF0012</name>
</gene>
<accession>Q8U4R1</accession>
<proteinExistence type="inferred from homology"/>